<gene>
    <name type="primary">sdaAB</name>
    <name type="synonym">yloW</name>
    <name type="ordered locus">BSU15850</name>
</gene>
<sequence>MKYRSVFDIIGPVMIGPSSSHTAGAARIGRVARSLFGREPERIIVSFYGSFAETYKGHGTDVAIIGGLLDFDTFDERIKTAIQIAEAKGIDIEFRVEDAVPVHPNTAKITISDEKGELELTGISIGGGKIEITELNGFELRLSGNHPAILVVHNDKFGTIAGVANVLAKFSINVGHMEVARKDIGQLALMTIEVDQNIDDHILDELSKLPNIIQVTKIAD</sequence>
<organism>
    <name type="scientific">Bacillus subtilis (strain 168)</name>
    <dbReference type="NCBI Taxonomy" id="224308"/>
    <lineage>
        <taxon>Bacteria</taxon>
        <taxon>Bacillati</taxon>
        <taxon>Bacillota</taxon>
        <taxon>Bacilli</taxon>
        <taxon>Bacillales</taxon>
        <taxon>Bacillaceae</taxon>
        <taxon>Bacillus</taxon>
    </lineage>
</organism>
<dbReference type="EC" id="4.3.1.17"/>
<dbReference type="EMBL" id="Y13937">
    <property type="protein sequence ID" value="CAA74258.1"/>
    <property type="molecule type" value="Genomic_DNA"/>
</dbReference>
<dbReference type="EMBL" id="AL009126">
    <property type="protein sequence ID" value="CAB13458.1"/>
    <property type="molecule type" value="Genomic_DNA"/>
</dbReference>
<dbReference type="PIR" id="F69879">
    <property type="entry name" value="F69879"/>
</dbReference>
<dbReference type="RefSeq" id="NP_389467.1">
    <property type="nucleotide sequence ID" value="NC_000964.3"/>
</dbReference>
<dbReference type="RefSeq" id="WP_003232050.1">
    <property type="nucleotide sequence ID" value="NZ_OZ025638.1"/>
</dbReference>
<dbReference type="SMR" id="O34635"/>
<dbReference type="FunCoup" id="O34635">
    <property type="interactions" value="216"/>
</dbReference>
<dbReference type="IntAct" id="O34635">
    <property type="interactions" value="1"/>
</dbReference>
<dbReference type="STRING" id="224308.BSU15850"/>
<dbReference type="jPOST" id="O34635"/>
<dbReference type="PaxDb" id="224308-BSU15850"/>
<dbReference type="EnsemblBacteria" id="CAB13458">
    <property type="protein sequence ID" value="CAB13458"/>
    <property type="gene ID" value="BSU_15850"/>
</dbReference>
<dbReference type="GeneID" id="935964"/>
<dbReference type="KEGG" id="bsu:BSU15850"/>
<dbReference type="PATRIC" id="fig|224308.179.peg.1725"/>
<dbReference type="eggNOG" id="COG1760">
    <property type="taxonomic scope" value="Bacteria"/>
</dbReference>
<dbReference type="InParanoid" id="O34635"/>
<dbReference type="OrthoDB" id="9813137at2"/>
<dbReference type="PhylomeDB" id="O34635"/>
<dbReference type="BioCyc" id="BSUB:BSU15850-MONOMER"/>
<dbReference type="UniPathway" id="UPA00138"/>
<dbReference type="Proteomes" id="UP000001570">
    <property type="component" value="Chromosome"/>
</dbReference>
<dbReference type="GO" id="GO:0051539">
    <property type="term" value="F:4 iron, 4 sulfur cluster binding"/>
    <property type="evidence" value="ECO:0007669"/>
    <property type="project" value="UniProtKB-KW"/>
</dbReference>
<dbReference type="GO" id="GO:0003941">
    <property type="term" value="F:L-serine ammonia-lyase activity"/>
    <property type="evidence" value="ECO:0000318"/>
    <property type="project" value="GO_Central"/>
</dbReference>
<dbReference type="GO" id="GO:0046872">
    <property type="term" value="F:metal ion binding"/>
    <property type="evidence" value="ECO:0007669"/>
    <property type="project" value="UniProtKB-KW"/>
</dbReference>
<dbReference type="GO" id="GO:0006094">
    <property type="term" value="P:gluconeogenesis"/>
    <property type="evidence" value="ECO:0007669"/>
    <property type="project" value="UniProtKB-UniPathway"/>
</dbReference>
<dbReference type="CDD" id="cd04903">
    <property type="entry name" value="ACT_LSD"/>
    <property type="match status" value="1"/>
</dbReference>
<dbReference type="FunFam" id="3.30.70.260:FF:000008">
    <property type="entry name" value="D-3-phosphoglycerate dehydrogenase, chloroplastic"/>
    <property type="match status" value="1"/>
</dbReference>
<dbReference type="FunFam" id="3.30.1330.90:FF:000004">
    <property type="entry name" value="L-serine dehydratase, iron-sulfur-dependent subunit beta"/>
    <property type="match status" value="1"/>
</dbReference>
<dbReference type="Gene3D" id="3.30.70.260">
    <property type="match status" value="1"/>
</dbReference>
<dbReference type="Gene3D" id="3.30.1330.90">
    <property type="entry name" value="D-3-phosphoglycerate dehydrogenase, domain 3"/>
    <property type="match status" value="1"/>
</dbReference>
<dbReference type="InterPro" id="IPR045865">
    <property type="entry name" value="ACT-like_dom_sf"/>
</dbReference>
<dbReference type="InterPro" id="IPR002912">
    <property type="entry name" value="ACT_dom"/>
</dbReference>
<dbReference type="InterPro" id="IPR029009">
    <property type="entry name" value="ASB_dom_sf"/>
</dbReference>
<dbReference type="InterPro" id="IPR051318">
    <property type="entry name" value="Fe-S_L-Ser"/>
</dbReference>
<dbReference type="InterPro" id="IPR004643">
    <property type="entry name" value="Fe-S_L-Ser_bsu"/>
</dbReference>
<dbReference type="InterPro" id="IPR005131">
    <property type="entry name" value="Ser_deHydtase_bsu"/>
</dbReference>
<dbReference type="NCBIfam" id="TIGR00719">
    <property type="entry name" value="sda_beta"/>
    <property type="match status" value="1"/>
</dbReference>
<dbReference type="PANTHER" id="PTHR30182">
    <property type="entry name" value="L-SERINE DEHYDRATASE"/>
    <property type="match status" value="1"/>
</dbReference>
<dbReference type="PANTHER" id="PTHR30182:SF12">
    <property type="entry name" value="L-SERINE DEHYDRATASE, BETA CHAIN-RELATED"/>
    <property type="match status" value="1"/>
</dbReference>
<dbReference type="Pfam" id="PF01842">
    <property type="entry name" value="ACT"/>
    <property type="match status" value="1"/>
</dbReference>
<dbReference type="Pfam" id="PF03315">
    <property type="entry name" value="SDH_beta"/>
    <property type="match status" value="1"/>
</dbReference>
<dbReference type="PIRSF" id="PIRSF036692">
    <property type="entry name" value="SDH_B"/>
    <property type="match status" value="1"/>
</dbReference>
<dbReference type="SUPFAM" id="SSF55021">
    <property type="entry name" value="ACT-like"/>
    <property type="match status" value="1"/>
</dbReference>
<dbReference type="SUPFAM" id="SSF143548">
    <property type="entry name" value="Serine metabolism enzymes domain"/>
    <property type="match status" value="1"/>
</dbReference>
<dbReference type="PROSITE" id="PS51671">
    <property type="entry name" value="ACT"/>
    <property type="match status" value="1"/>
</dbReference>
<feature type="chain" id="PRO_0000171916" description="Probable L-serine dehydratase, beta chain">
    <location>
        <begin position="1"/>
        <end position="220"/>
    </location>
</feature>
<feature type="domain" description="ACT" evidence="2">
    <location>
        <begin position="148"/>
        <end position="220"/>
    </location>
</feature>
<reference key="1">
    <citation type="journal article" date="1998" name="Microbiology">
        <title>A 28 kbp segment from the spoVM region of the Bacillus subtilis 168 genome.</title>
        <authorList>
            <person name="Foulger D."/>
            <person name="Errington J."/>
        </authorList>
    </citation>
    <scope>NUCLEOTIDE SEQUENCE [GENOMIC DNA]</scope>
    <source>
        <strain>168</strain>
    </source>
</reference>
<reference key="2">
    <citation type="journal article" date="1997" name="Nature">
        <title>The complete genome sequence of the Gram-positive bacterium Bacillus subtilis.</title>
        <authorList>
            <person name="Kunst F."/>
            <person name="Ogasawara N."/>
            <person name="Moszer I."/>
            <person name="Albertini A.M."/>
            <person name="Alloni G."/>
            <person name="Azevedo V."/>
            <person name="Bertero M.G."/>
            <person name="Bessieres P."/>
            <person name="Bolotin A."/>
            <person name="Borchert S."/>
            <person name="Borriss R."/>
            <person name="Boursier L."/>
            <person name="Brans A."/>
            <person name="Braun M."/>
            <person name="Brignell S.C."/>
            <person name="Bron S."/>
            <person name="Brouillet S."/>
            <person name="Bruschi C.V."/>
            <person name="Caldwell B."/>
            <person name="Capuano V."/>
            <person name="Carter N.M."/>
            <person name="Choi S.-K."/>
            <person name="Codani J.-J."/>
            <person name="Connerton I.F."/>
            <person name="Cummings N.J."/>
            <person name="Daniel R.A."/>
            <person name="Denizot F."/>
            <person name="Devine K.M."/>
            <person name="Duesterhoeft A."/>
            <person name="Ehrlich S.D."/>
            <person name="Emmerson P.T."/>
            <person name="Entian K.-D."/>
            <person name="Errington J."/>
            <person name="Fabret C."/>
            <person name="Ferrari E."/>
            <person name="Foulger D."/>
            <person name="Fritz C."/>
            <person name="Fujita M."/>
            <person name="Fujita Y."/>
            <person name="Fuma S."/>
            <person name="Galizzi A."/>
            <person name="Galleron N."/>
            <person name="Ghim S.-Y."/>
            <person name="Glaser P."/>
            <person name="Goffeau A."/>
            <person name="Golightly E.J."/>
            <person name="Grandi G."/>
            <person name="Guiseppi G."/>
            <person name="Guy B.J."/>
            <person name="Haga K."/>
            <person name="Haiech J."/>
            <person name="Harwood C.R."/>
            <person name="Henaut A."/>
            <person name="Hilbert H."/>
            <person name="Holsappel S."/>
            <person name="Hosono S."/>
            <person name="Hullo M.-F."/>
            <person name="Itaya M."/>
            <person name="Jones L.-M."/>
            <person name="Joris B."/>
            <person name="Karamata D."/>
            <person name="Kasahara Y."/>
            <person name="Klaerr-Blanchard M."/>
            <person name="Klein C."/>
            <person name="Kobayashi Y."/>
            <person name="Koetter P."/>
            <person name="Koningstein G."/>
            <person name="Krogh S."/>
            <person name="Kumano M."/>
            <person name="Kurita K."/>
            <person name="Lapidus A."/>
            <person name="Lardinois S."/>
            <person name="Lauber J."/>
            <person name="Lazarevic V."/>
            <person name="Lee S.-M."/>
            <person name="Levine A."/>
            <person name="Liu H."/>
            <person name="Masuda S."/>
            <person name="Mauel C."/>
            <person name="Medigue C."/>
            <person name="Medina N."/>
            <person name="Mellado R.P."/>
            <person name="Mizuno M."/>
            <person name="Moestl D."/>
            <person name="Nakai S."/>
            <person name="Noback M."/>
            <person name="Noone D."/>
            <person name="O'Reilly M."/>
            <person name="Ogawa K."/>
            <person name="Ogiwara A."/>
            <person name="Oudega B."/>
            <person name="Park S.-H."/>
            <person name="Parro V."/>
            <person name="Pohl T.M."/>
            <person name="Portetelle D."/>
            <person name="Porwollik S."/>
            <person name="Prescott A.M."/>
            <person name="Presecan E."/>
            <person name="Pujic P."/>
            <person name="Purnelle B."/>
            <person name="Rapoport G."/>
            <person name="Rey M."/>
            <person name="Reynolds S."/>
            <person name="Rieger M."/>
            <person name="Rivolta C."/>
            <person name="Rocha E."/>
            <person name="Roche B."/>
            <person name="Rose M."/>
            <person name="Sadaie Y."/>
            <person name="Sato T."/>
            <person name="Scanlan E."/>
            <person name="Schleich S."/>
            <person name="Schroeter R."/>
            <person name="Scoffone F."/>
            <person name="Sekiguchi J."/>
            <person name="Sekowska A."/>
            <person name="Seror S.J."/>
            <person name="Serror P."/>
            <person name="Shin B.-S."/>
            <person name="Soldo B."/>
            <person name="Sorokin A."/>
            <person name="Tacconi E."/>
            <person name="Takagi T."/>
            <person name="Takahashi H."/>
            <person name="Takemaru K."/>
            <person name="Takeuchi M."/>
            <person name="Tamakoshi A."/>
            <person name="Tanaka T."/>
            <person name="Terpstra P."/>
            <person name="Tognoni A."/>
            <person name="Tosato V."/>
            <person name="Uchiyama S."/>
            <person name="Vandenbol M."/>
            <person name="Vannier F."/>
            <person name="Vassarotti A."/>
            <person name="Viari A."/>
            <person name="Wambutt R."/>
            <person name="Wedler E."/>
            <person name="Wedler H."/>
            <person name="Weitzenegger T."/>
            <person name="Winters P."/>
            <person name="Wipat A."/>
            <person name="Yamamoto H."/>
            <person name="Yamane K."/>
            <person name="Yasumoto K."/>
            <person name="Yata K."/>
            <person name="Yoshida K."/>
            <person name="Yoshikawa H.-F."/>
            <person name="Zumstein E."/>
            <person name="Yoshikawa H."/>
            <person name="Danchin A."/>
        </authorList>
    </citation>
    <scope>NUCLEOTIDE SEQUENCE [LARGE SCALE GENOMIC DNA]</scope>
    <source>
        <strain>168</strain>
    </source>
</reference>
<keyword id="KW-0004">4Fe-4S</keyword>
<keyword id="KW-0312">Gluconeogenesis</keyword>
<keyword id="KW-0408">Iron</keyword>
<keyword id="KW-0411">Iron-sulfur</keyword>
<keyword id="KW-0456">Lyase</keyword>
<keyword id="KW-0479">Metal-binding</keyword>
<keyword id="KW-1185">Reference proteome</keyword>
<protein>
    <recommendedName>
        <fullName>Probable L-serine dehydratase, beta chain</fullName>
        <shortName>SDH</shortName>
        <ecNumber>4.3.1.17</ecNumber>
    </recommendedName>
    <alternativeName>
        <fullName>L-serine deaminase</fullName>
        <shortName>L-SD</shortName>
    </alternativeName>
</protein>
<accession>O34635</accession>
<proteinExistence type="inferred from homology"/>
<name>SDHAB_BACSU</name>
<evidence type="ECO:0000250" key="1"/>
<evidence type="ECO:0000255" key="2">
    <source>
        <dbReference type="PROSITE-ProRule" id="PRU01007"/>
    </source>
</evidence>
<evidence type="ECO:0000305" key="3"/>
<comment type="catalytic activity">
    <reaction>
        <text>L-serine = pyruvate + NH4(+)</text>
        <dbReference type="Rhea" id="RHEA:19169"/>
        <dbReference type="ChEBI" id="CHEBI:15361"/>
        <dbReference type="ChEBI" id="CHEBI:28938"/>
        <dbReference type="ChEBI" id="CHEBI:33384"/>
        <dbReference type="EC" id="4.3.1.17"/>
    </reaction>
</comment>
<comment type="cofactor">
    <cofactor evidence="1">
        <name>[4Fe-4S] cluster</name>
        <dbReference type="ChEBI" id="CHEBI:49883"/>
    </cofactor>
    <text evidence="1">Binds 1 [4Fe-4S] cluster.</text>
</comment>
<comment type="pathway">
    <text>Carbohydrate biosynthesis; gluconeogenesis.</text>
</comment>
<comment type="subunit">
    <text evidence="1">Heterodimer of an alpha chain and a beta chain.</text>
</comment>
<comment type="similarity">
    <text evidence="3">Belongs to the iron-sulfur dependent L-serine dehydratase family.</text>
</comment>